<gene>
    <name evidence="1" type="primary">serS</name>
    <name type="ordered locus">BTH_I1565</name>
</gene>
<name>SYS_BURTA</name>
<keyword id="KW-0030">Aminoacyl-tRNA synthetase</keyword>
<keyword id="KW-0067">ATP-binding</keyword>
<keyword id="KW-0963">Cytoplasm</keyword>
<keyword id="KW-0436">Ligase</keyword>
<keyword id="KW-0547">Nucleotide-binding</keyword>
<keyword id="KW-0648">Protein biosynthesis</keyword>
<feature type="chain" id="PRO_1000019636" description="Serine--tRNA ligase">
    <location>
        <begin position="1"/>
        <end position="433"/>
    </location>
</feature>
<feature type="binding site" evidence="1">
    <location>
        <begin position="235"/>
        <end position="237"/>
    </location>
    <ligand>
        <name>L-serine</name>
        <dbReference type="ChEBI" id="CHEBI:33384"/>
    </ligand>
</feature>
<feature type="binding site" evidence="1">
    <location>
        <begin position="266"/>
        <end position="268"/>
    </location>
    <ligand>
        <name>ATP</name>
        <dbReference type="ChEBI" id="CHEBI:30616"/>
    </ligand>
</feature>
<feature type="binding site" evidence="1">
    <location>
        <position position="289"/>
    </location>
    <ligand>
        <name>L-serine</name>
        <dbReference type="ChEBI" id="CHEBI:33384"/>
    </ligand>
</feature>
<feature type="binding site" evidence="1">
    <location>
        <begin position="353"/>
        <end position="356"/>
    </location>
    <ligand>
        <name>ATP</name>
        <dbReference type="ChEBI" id="CHEBI:30616"/>
    </ligand>
</feature>
<feature type="binding site" evidence="1">
    <location>
        <position position="388"/>
    </location>
    <ligand>
        <name>L-serine</name>
        <dbReference type="ChEBI" id="CHEBI:33384"/>
    </ligand>
</feature>
<comment type="function">
    <text evidence="1">Catalyzes the attachment of serine to tRNA(Ser). Is also able to aminoacylate tRNA(Sec) with serine, to form the misacylated tRNA L-seryl-tRNA(Sec), which will be further converted into selenocysteinyl-tRNA(Sec).</text>
</comment>
<comment type="catalytic activity">
    <reaction evidence="1">
        <text>tRNA(Ser) + L-serine + ATP = L-seryl-tRNA(Ser) + AMP + diphosphate + H(+)</text>
        <dbReference type="Rhea" id="RHEA:12292"/>
        <dbReference type="Rhea" id="RHEA-COMP:9669"/>
        <dbReference type="Rhea" id="RHEA-COMP:9703"/>
        <dbReference type="ChEBI" id="CHEBI:15378"/>
        <dbReference type="ChEBI" id="CHEBI:30616"/>
        <dbReference type="ChEBI" id="CHEBI:33019"/>
        <dbReference type="ChEBI" id="CHEBI:33384"/>
        <dbReference type="ChEBI" id="CHEBI:78442"/>
        <dbReference type="ChEBI" id="CHEBI:78533"/>
        <dbReference type="ChEBI" id="CHEBI:456215"/>
        <dbReference type="EC" id="6.1.1.11"/>
    </reaction>
</comment>
<comment type="catalytic activity">
    <reaction evidence="1">
        <text>tRNA(Sec) + L-serine + ATP = L-seryl-tRNA(Sec) + AMP + diphosphate + H(+)</text>
        <dbReference type="Rhea" id="RHEA:42580"/>
        <dbReference type="Rhea" id="RHEA-COMP:9742"/>
        <dbReference type="Rhea" id="RHEA-COMP:10128"/>
        <dbReference type="ChEBI" id="CHEBI:15378"/>
        <dbReference type="ChEBI" id="CHEBI:30616"/>
        <dbReference type="ChEBI" id="CHEBI:33019"/>
        <dbReference type="ChEBI" id="CHEBI:33384"/>
        <dbReference type="ChEBI" id="CHEBI:78442"/>
        <dbReference type="ChEBI" id="CHEBI:78533"/>
        <dbReference type="ChEBI" id="CHEBI:456215"/>
        <dbReference type="EC" id="6.1.1.11"/>
    </reaction>
</comment>
<comment type="pathway">
    <text evidence="1">Aminoacyl-tRNA biosynthesis; selenocysteinyl-tRNA(Sec) biosynthesis; L-seryl-tRNA(Sec) from L-serine and tRNA(Sec): step 1/1.</text>
</comment>
<comment type="subunit">
    <text evidence="1">Homodimer. The tRNA molecule binds across the dimer.</text>
</comment>
<comment type="subcellular location">
    <subcellularLocation>
        <location evidence="1">Cytoplasm</location>
    </subcellularLocation>
</comment>
<comment type="domain">
    <text evidence="1">Consists of two distinct domains, a catalytic core and a N-terminal extension that is involved in tRNA binding.</text>
</comment>
<comment type="similarity">
    <text evidence="1">Belongs to the class-II aminoacyl-tRNA synthetase family. Type-1 seryl-tRNA synthetase subfamily.</text>
</comment>
<protein>
    <recommendedName>
        <fullName evidence="1">Serine--tRNA ligase</fullName>
        <ecNumber evidence="1">6.1.1.11</ecNumber>
    </recommendedName>
    <alternativeName>
        <fullName evidence="1">Seryl-tRNA synthetase</fullName>
        <shortName evidence="1">SerRS</shortName>
    </alternativeName>
    <alternativeName>
        <fullName evidence="1">Seryl-tRNA(Ser/Sec) synthetase</fullName>
    </alternativeName>
</protein>
<sequence>MLDIQLLRKDLDGVAKRLADRGYTLDVAAFSALEAERRAIQTRTEELQARRNSLSKQIGAMKGRGEDTSAVMAEVGGIGDEMKASAVKLDEIQARLSELMLEMPNVPHESVPVGRDETENVEVRRWGAPRQFDFDVKDHVDVGTPLGLDFETGAKLSGARFTVLRGPIARLHRALAQFMLDTHTQQHGYSETYTPYIVNPDVLYGTGQLPKFAEDMFRVEKGGAENTVTQYLISTSEISLTNTVRDSIVDASALPIKLTAHSPCFRSEAGSYGRDTRGMIRQHQFDKVEMVQIVAPEASYAALDEMVGHAEAILQTLELPYRVVALCTGDMGFSAAKTFDLEVWLPAQNTYREISSCSNTESFQARRMQARFRNAQGKPELVHTLNGSGLAVGRTLVAVLENYQNADGSVTVPVALRPYMGGVERIAAPSSAA</sequence>
<evidence type="ECO:0000255" key="1">
    <source>
        <dbReference type="HAMAP-Rule" id="MF_00176"/>
    </source>
</evidence>
<organism>
    <name type="scientific">Burkholderia thailandensis (strain ATCC 700388 / DSM 13276 / CCUG 48851 / CIP 106301 / E264)</name>
    <dbReference type="NCBI Taxonomy" id="271848"/>
    <lineage>
        <taxon>Bacteria</taxon>
        <taxon>Pseudomonadati</taxon>
        <taxon>Pseudomonadota</taxon>
        <taxon>Betaproteobacteria</taxon>
        <taxon>Burkholderiales</taxon>
        <taxon>Burkholderiaceae</taxon>
        <taxon>Burkholderia</taxon>
        <taxon>pseudomallei group</taxon>
    </lineage>
</organism>
<accession>Q2SY90</accession>
<dbReference type="EC" id="6.1.1.11" evidence="1"/>
<dbReference type="EMBL" id="CP000086">
    <property type="protein sequence ID" value="ABC36401.1"/>
    <property type="molecule type" value="Genomic_DNA"/>
</dbReference>
<dbReference type="RefSeq" id="WP_009908876.1">
    <property type="nucleotide sequence ID" value="NZ_CP008785.1"/>
</dbReference>
<dbReference type="SMR" id="Q2SY90"/>
<dbReference type="GeneID" id="45121300"/>
<dbReference type="KEGG" id="bte:BTH_I1565"/>
<dbReference type="HOGENOM" id="CLU_023797_1_1_4"/>
<dbReference type="UniPathway" id="UPA00906">
    <property type="reaction ID" value="UER00895"/>
</dbReference>
<dbReference type="Proteomes" id="UP000001930">
    <property type="component" value="Chromosome I"/>
</dbReference>
<dbReference type="GO" id="GO:0005737">
    <property type="term" value="C:cytoplasm"/>
    <property type="evidence" value="ECO:0007669"/>
    <property type="project" value="UniProtKB-SubCell"/>
</dbReference>
<dbReference type="GO" id="GO:0005524">
    <property type="term" value="F:ATP binding"/>
    <property type="evidence" value="ECO:0007669"/>
    <property type="project" value="UniProtKB-UniRule"/>
</dbReference>
<dbReference type="GO" id="GO:0004828">
    <property type="term" value="F:serine-tRNA ligase activity"/>
    <property type="evidence" value="ECO:0007669"/>
    <property type="project" value="UniProtKB-UniRule"/>
</dbReference>
<dbReference type="GO" id="GO:0016260">
    <property type="term" value="P:selenocysteine biosynthetic process"/>
    <property type="evidence" value="ECO:0007669"/>
    <property type="project" value="UniProtKB-UniRule"/>
</dbReference>
<dbReference type="GO" id="GO:0006434">
    <property type="term" value="P:seryl-tRNA aminoacylation"/>
    <property type="evidence" value="ECO:0007669"/>
    <property type="project" value="UniProtKB-UniRule"/>
</dbReference>
<dbReference type="CDD" id="cd00770">
    <property type="entry name" value="SerRS_core"/>
    <property type="match status" value="1"/>
</dbReference>
<dbReference type="Gene3D" id="3.30.930.10">
    <property type="entry name" value="Bira Bifunctional Protein, Domain 2"/>
    <property type="match status" value="1"/>
</dbReference>
<dbReference type="Gene3D" id="1.10.287.40">
    <property type="entry name" value="Serine-tRNA synthetase, tRNA binding domain"/>
    <property type="match status" value="1"/>
</dbReference>
<dbReference type="HAMAP" id="MF_00176">
    <property type="entry name" value="Ser_tRNA_synth_type1"/>
    <property type="match status" value="1"/>
</dbReference>
<dbReference type="InterPro" id="IPR002314">
    <property type="entry name" value="aa-tRNA-synt_IIb"/>
</dbReference>
<dbReference type="InterPro" id="IPR006195">
    <property type="entry name" value="aa-tRNA-synth_II"/>
</dbReference>
<dbReference type="InterPro" id="IPR045864">
    <property type="entry name" value="aa-tRNA-synth_II/BPL/LPL"/>
</dbReference>
<dbReference type="InterPro" id="IPR002317">
    <property type="entry name" value="Ser-tRNA-ligase_type_1"/>
</dbReference>
<dbReference type="InterPro" id="IPR015866">
    <property type="entry name" value="Ser-tRNA-synth_1_N"/>
</dbReference>
<dbReference type="InterPro" id="IPR042103">
    <property type="entry name" value="SerRS_1_N_sf"/>
</dbReference>
<dbReference type="InterPro" id="IPR033729">
    <property type="entry name" value="SerRS_core"/>
</dbReference>
<dbReference type="InterPro" id="IPR010978">
    <property type="entry name" value="tRNA-bd_arm"/>
</dbReference>
<dbReference type="NCBIfam" id="TIGR00414">
    <property type="entry name" value="serS"/>
    <property type="match status" value="1"/>
</dbReference>
<dbReference type="PANTHER" id="PTHR43697:SF1">
    <property type="entry name" value="SERINE--TRNA LIGASE"/>
    <property type="match status" value="1"/>
</dbReference>
<dbReference type="PANTHER" id="PTHR43697">
    <property type="entry name" value="SERYL-TRNA SYNTHETASE"/>
    <property type="match status" value="1"/>
</dbReference>
<dbReference type="Pfam" id="PF02403">
    <property type="entry name" value="Seryl_tRNA_N"/>
    <property type="match status" value="1"/>
</dbReference>
<dbReference type="Pfam" id="PF00587">
    <property type="entry name" value="tRNA-synt_2b"/>
    <property type="match status" value="1"/>
</dbReference>
<dbReference type="PIRSF" id="PIRSF001529">
    <property type="entry name" value="Ser-tRNA-synth_IIa"/>
    <property type="match status" value="1"/>
</dbReference>
<dbReference type="PRINTS" id="PR00981">
    <property type="entry name" value="TRNASYNTHSER"/>
</dbReference>
<dbReference type="SUPFAM" id="SSF55681">
    <property type="entry name" value="Class II aaRS and biotin synthetases"/>
    <property type="match status" value="1"/>
</dbReference>
<dbReference type="SUPFAM" id="SSF46589">
    <property type="entry name" value="tRNA-binding arm"/>
    <property type="match status" value="1"/>
</dbReference>
<dbReference type="PROSITE" id="PS50862">
    <property type="entry name" value="AA_TRNA_LIGASE_II"/>
    <property type="match status" value="1"/>
</dbReference>
<reference key="1">
    <citation type="journal article" date="2005" name="BMC Genomics">
        <title>Bacterial genome adaptation to niches: divergence of the potential virulence genes in three Burkholderia species of different survival strategies.</title>
        <authorList>
            <person name="Kim H.S."/>
            <person name="Schell M.A."/>
            <person name="Yu Y."/>
            <person name="Ulrich R.L."/>
            <person name="Sarria S.H."/>
            <person name="Nierman W.C."/>
            <person name="DeShazer D."/>
        </authorList>
    </citation>
    <scope>NUCLEOTIDE SEQUENCE [LARGE SCALE GENOMIC DNA]</scope>
    <source>
        <strain>ATCC 700388 / DSM 13276 / CCUG 48851 / CIP 106301 / E264</strain>
    </source>
</reference>
<proteinExistence type="inferred from homology"/>